<feature type="chain" id="PRO_0000368311" description="ATP synthase subunit b">
    <location>
        <begin position="1"/>
        <end position="175"/>
    </location>
</feature>
<feature type="transmembrane region" description="Helical" evidence="1">
    <location>
        <begin position="23"/>
        <end position="43"/>
    </location>
</feature>
<keyword id="KW-0066">ATP synthesis</keyword>
<keyword id="KW-0997">Cell inner membrane</keyword>
<keyword id="KW-1003">Cell membrane</keyword>
<keyword id="KW-0138">CF(0)</keyword>
<keyword id="KW-0375">Hydrogen ion transport</keyword>
<keyword id="KW-0406">Ion transport</keyword>
<keyword id="KW-0472">Membrane</keyword>
<keyword id="KW-1185">Reference proteome</keyword>
<keyword id="KW-0812">Transmembrane</keyword>
<keyword id="KW-1133">Transmembrane helix</keyword>
<keyword id="KW-0813">Transport</keyword>
<comment type="function">
    <text evidence="1">F(1)F(0) ATP synthase produces ATP from ADP in the presence of a proton or sodium gradient. F-type ATPases consist of two structural domains, F(1) containing the extramembraneous catalytic core and F(0) containing the membrane proton channel, linked together by a central stalk and a peripheral stalk. During catalysis, ATP synthesis in the catalytic domain of F(1) is coupled via a rotary mechanism of the central stalk subunits to proton translocation.</text>
</comment>
<comment type="function">
    <text evidence="1">Component of the F(0) channel, it forms part of the peripheral stalk, linking F(1) to F(0).</text>
</comment>
<comment type="subunit">
    <text evidence="1">F-type ATPases have 2 components, F(1) - the catalytic core - and F(0) - the membrane proton channel. F(1) has five subunits: alpha(3), beta(3), gamma(1), delta(1), epsilon(1). F(0) has three main subunits: a(1), b(2) and c(10-14). The alpha and beta chains form an alternating ring which encloses part of the gamma chain. F(1) is attached to F(0) by a central stalk formed by the gamma and epsilon chains, while a peripheral stalk is formed by the delta and b chains.</text>
</comment>
<comment type="subcellular location">
    <subcellularLocation>
        <location evidence="1">Cell inner membrane</location>
        <topology evidence="1">Single-pass membrane protein</topology>
    </subcellularLocation>
</comment>
<comment type="similarity">
    <text evidence="1">Belongs to the ATPase B chain family.</text>
</comment>
<reference key="1">
    <citation type="journal article" date="2015" name="Genome Announc.">
        <title>Complete genome sequence of Anaeromyxobacter sp. Fw109-5, an anaerobic, metal-reducing bacterium isolated from a contaminated subsurface environment.</title>
        <authorList>
            <person name="Hwang C."/>
            <person name="Copeland A."/>
            <person name="Lucas S."/>
            <person name="Lapidus A."/>
            <person name="Barry K."/>
            <person name="Glavina Del Rio T."/>
            <person name="Dalin E."/>
            <person name="Tice H."/>
            <person name="Pitluck S."/>
            <person name="Sims D."/>
            <person name="Brettin T."/>
            <person name="Bruce D.C."/>
            <person name="Detter J.C."/>
            <person name="Han C.S."/>
            <person name="Schmutz J."/>
            <person name="Larimer F.W."/>
            <person name="Land M.L."/>
            <person name="Hauser L.J."/>
            <person name="Kyrpides N."/>
            <person name="Lykidis A."/>
            <person name="Richardson P."/>
            <person name="Belieav A."/>
            <person name="Sanford R.A."/>
            <person name="Loeffler F.E."/>
            <person name="Fields M.W."/>
        </authorList>
    </citation>
    <scope>NUCLEOTIDE SEQUENCE [LARGE SCALE GENOMIC DNA]</scope>
    <source>
        <strain>Fw109-5</strain>
    </source>
</reference>
<name>ATPF_ANADF</name>
<gene>
    <name evidence="1" type="primary">atpF</name>
    <name type="ordered locus">Anae109_4485</name>
</gene>
<proteinExistence type="inferred from homology"/>
<organism>
    <name type="scientific">Anaeromyxobacter sp. (strain Fw109-5)</name>
    <dbReference type="NCBI Taxonomy" id="404589"/>
    <lineage>
        <taxon>Bacteria</taxon>
        <taxon>Pseudomonadati</taxon>
        <taxon>Myxococcota</taxon>
        <taxon>Myxococcia</taxon>
        <taxon>Myxococcales</taxon>
        <taxon>Cystobacterineae</taxon>
        <taxon>Anaeromyxobacteraceae</taxon>
        <taxon>Anaeromyxobacter</taxon>
    </lineage>
</organism>
<accession>A7HIW7</accession>
<evidence type="ECO:0000255" key="1">
    <source>
        <dbReference type="HAMAP-Rule" id="MF_01398"/>
    </source>
</evidence>
<protein>
    <recommendedName>
        <fullName evidence="1">ATP synthase subunit b</fullName>
    </recommendedName>
    <alternativeName>
        <fullName evidence="1">ATP synthase F(0) sector subunit b</fullName>
    </alternativeName>
    <alternativeName>
        <fullName evidence="1">ATPase subunit I</fullName>
    </alternativeName>
    <alternativeName>
        <fullName evidence="1">F-type ATPase subunit b</fullName>
        <shortName evidence="1">F-ATPase subunit b</shortName>
    </alternativeName>
</protein>
<sequence>MVSFPVLAAGGITDINPGLTLWTGITFLVLLFVLGKFAWGPIVKMLAERERTIREAIDSAKRERTEAERLLAEQKALLGKAAREAAELARRNQQEVEAMRQELTARARKEADDLVATARKQIEEEKTKAMSELRAVVADLAIDAASRLVKANLDDASQRKLVEDYIAQLPANRAA</sequence>
<dbReference type="EMBL" id="CP000769">
    <property type="protein sequence ID" value="ABS28663.1"/>
    <property type="molecule type" value="Genomic_DNA"/>
</dbReference>
<dbReference type="RefSeq" id="WP_012099313.1">
    <property type="nucleotide sequence ID" value="NC_009675.1"/>
</dbReference>
<dbReference type="SMR" id="A7HIW7"/>
<dbReference type="STRING" id="404589.Anae109_4485"/>
<dbReference type="KEGG" id="afw:Anae109_4485"/>
<dbReference type="eggNOG" id="COG0711">
    <property type="taxonomic scope" value="Bacteria"/>
</dbReference>
<dbReference type="HOGENOM" id="CLU_079215_4_1_7"/>
<dbReference type="OrthoDB" id="9795289at2"/>
<dbReference type="Proteomes" id="UP000006382">
    <property type="component" value="Chromosome"/>
</dbReference>
<dbReference type="GO" id="GO:0005886">
    <property type="term" value="C:plasma membrane"/>
    <property type="evidence" value="ECO:0007669"/>
    <property type="project" value="UniProtKB-SubCell"/>
</dbReference>
<dbReference type="GO" id="GO:0045259">
    <property type="term" value="C:proton-transporting ATP synthase complex"/>
    <property type="evidence" value="ECO:0007669"/>
    <property type="project" value="UniProtKB-KW"/>
</dbReference>
<dbReference type="GO" id="GO:0046933">
    <property type="term" value="F:proton-transporting ATP synthase activity, rotational mechanism"/>
    <property type="evidence" value="ECO:0007669"/>
    <property type="project" value="UniProtKB-UniRule"/>
</dbReference>
<dbReference type="GO" id="GO:0046961">
    <property type="term" value="F:proton-transporting ATPase activity, rotational mechanism"/>
    <property type="evidence" value="ECO:0007669"/>
    <property type="project" value="TreeGrafter"/>
</dbReference>
<dbReference type="CDD" id="cd06503">
    <property type="entry name" value="ATP-synt_Fo_b"/>
    <property type="match status" value="1"/>
</dbReference>
<dbReference type="HAMAP" id="MF_01398">
    <property type="entry name" value="ATP_synth_b_bprime"/>
    <property type="match status" value="1"/>
</dbReference>
<dbReference type="InterPro" id="IPR002146">
    <property type="entry name" value="ATP_synth_b/b'su_bac/chlpt"/>
</dbReference>
<dbReference type="InterPro" id="IPR005864">
    <property type="entry name" value="ATP_synth_F0_bsu_bac"/>
</dbReference>
<dbReference type="InterPro" id="IPR050059">
    <property type="entry name" value="ATP_synthase_B_chain"/>
</dbReference>
<dbReference type="NCBIfam" id="TIGR01144">
    <property type="entry name" value="ATP_synt_b"/>
    <property type="match status" value="1"/>
</dbReference>
<dbReference type="PANTHER" id="PTHR33445:SF1">
    <property type="entry name" value="ATP SYNTHASE SUBUNIT B"/>
    <property type="match status" value="1"/>
</dbReference>
<dbReference type="PANTHER" id="PTHR33445">
    <property type="entry name" value="ATP SYNTHASE SUBUNIT B', CHLOROPLASTIC"/>
    <property type="match status" value="1"/>
</dbReference>
<dbReference type="Pfam" id="PF00430">
    <property type="entry name" value="ATP-synt_B"/>
    <property type="match status" value="1"/>
</dbReference>